<feature type="chain" id="PRO_0000224583" description="Valine--tRNA ligase">
    <location>
        <begin position="1"/>
        <end position="874"/>
    </location>
</feature>
<feature type="region of interest" description="Disordered" evidence="2">
    <location>
        <begin position="1"/>
        <end position="23"/>
    </location>
</feature>
<feature type="coiled-coil region" evidence="1">
    <location>
        <begin position="806"/>
        <end position="871"/>
    </location>
</feature>
<feature type="short sequence motif" description="'HIGH' region">
    <location>
        <begin position="57"/>
        <end position="67"/>
    </location>
</feature>
<feature type="short sequence motif" description="'KMSKS' region">
    <location>
        <begin position="531"/>
        <end position="535"/>
    </location>
</feature>
<feature type="compositionally biased region" description="Polar residues" evidence="2">
    <location>
        <begin position="1"/>
        <end position="10"/>
    </location>
</feature>
<feature type="binding site" evidence="1">
    <location>
        <position position="534"/>
    </location>
    <ligand>
        <name>ATP</name>
        <dbReference type="ChEBI" id="CHEBI:30616"/>
    </ligand>
</feature>
<protein>
    <recommendedName>
        <fullName evidence="1">Valine--tRNA ligase</fullName>
        <ecNumber evidence="1">6.1.1.9</ecNumber>
    </recommendedName>
    <alternativeName>
        <fullName evidence="1">Valyl-tRNA synthetase</fullName>
        <shortName evidence="1">ValRS</shortName>
    </alternativeName>
</protein>
<accession>Q82CA3</accession>
<evidence type="ECO:0000255" key="1">
    <source>
        <dbReference type="HAMAP-Rule" id="MF_02004"/>
    </source>
</evidence>
<evidence type="ECO:0000256" key="2">
    <source>
        <dbReference type="SAM" id="MobiDB-lite"/>
    </source>
</evidence>
<reference key="1">
    <citation type="journal article" date="2001" name="Proc. Natl. Acad. Sci. U.S.A.">
        <title>Genome sequence of an industrial microorganism Streptomyces avermitilis: deducing the ability of producing secondary metabolites.</title>
        <authorList>
            <person name="Omura S."/>
            <person name="Ikeda H."/>
            <person name="Ishikawa J."/>
            <person name="Hanamoto A."/>
            <person name="Takahashi C."/>
            <person name="Shinose M."/>
            <person name="Takahashi Y."/>
            <person name="Horikawa H."/>
            <person name="Nakazawa H."/>
            <person name="Osonoe T."/>
            <person name="Kikuchi H."/>
            <person name="Shiba T."/>
            <person name="Sakaki Y."/>
            <person name="Hattori M."/>
        </authorList>
    </citation>
    <scope>NUCLEOTIDE SEQUENCE [LARGE SCALE GENOMIC DNA]</scope>
    <source>
        <strain>ATCC 31267 / DSM 46492 / JCM 5070 / NBRC 14893 / NCIMB 12804 / NRRL 8165 / MA-4680</strain>
    </source>
</reference>
<reference key="2">
    <citation type="journal article" date="2003" name="Nat. Biotechnol.">
        <title>Complete genome sequence and comparative analysis of the industrial microorganism Streptomyces avermitilis.</title>
        <authorList>
            <person name="Ikeda H."/>
            <person name="Ishikawa J."/>
            <person name="Hanamoto A."/>
            <person name="Shinose M."/>
            <person name="Kikuchi H."/>
            <person name="Shiba T."/>
            <person name="Sakaki Y."/>
            <person name="Hattori M."/>
            <person name="Omura S."/>
        </authorList>
    </citation>
    <scope>NUCLEOTIDE SEQUENCE [LARGE SCALE GENOMIC DNA]</scope>
    <source>
        <strain>ATCC 31267 / DSM 46492 / JCM 5070 / NBRC 14893 / NCIMB 12804 / NRRL 8165 / MA-4680</strain>
    </source>
</reference>
<comment type="function">
    <text evidence="1">Catalyzes the attachment of valine to tRNA(Val). As ValRS can inadvertently accommodate and process structurally similar amino acids such as threonine, to avoid such errors, it has a 'posttransfer' editing activity that hydrolyzes mischarged Thr-tRNA(Val) in a tRNA-dependent manner.</text>
</comment>
<comment type="catalytic activity">
    <reaction evidence="1">
        <text>tRNA(Val) + L-valine + ATP = L-valyl-tRNA(Val) + AMP + diphosphate</text>
        <dbReference type="Rhea" id="RHEA:10704"/>
        <dbReference type="Rhea" id="RHEA-COMP:9672"/>
        <dbReference type="Rhea" id="RHEA-COMP:9708"/>
        <dbReference type="ChEBI" id="CHEBI:30616"/>
        <dbReference type="ChEBI" id="CHEBI:33019"/>
        <dbReference type="ChEBI" id="CHEBI:57762"/>
        <dbReference type="ChEBI" id="CHEBI:78442"/>
        <dbReference type="ChEBI" id="CHEBI:78537"/>
        <dbReference type="ChEBI" id="CHEBI:456215"/>
        <dbReference type="EC" id="6.1.1.9"/>
    </reaction>
</comment>
<comment type="subunit">
    <text evidence="1">Monomer.</text>
</comment>
<comment type="subcellular location">
    <subcellularLocation>
        <location evidence="1">Cytoplasm</location>
    </subcellularLocation>
</comment>
<comment type="domain">
    <text evidence="1">ValRS has two distinct active sites: one for aminoacylation and one for editing. The misactivated threonine is translocated from the active site to the editing site.</text>
</comment>
<comment type="domain">
    <text evidence="1">The C-terminal coiled-coil domain is crucial for aminoacylation activity.</text>
</comment>
<comment type="similarity">
    <text evidence="1">Belongs to the class-I aminoacyl-tRNA synthetase family. ValS type 1 subfamily.</text>
</comment>
<gene>
    <name evidence="1" type="primary">valS</name>
    <name type="ordered locus">SAV_5451</name>
</gene>
<name>SYV_STRAW</name>
<dbReference type="EC" id="6.1.1.9" evidence="1"/>
<dbReference type="EMBL" id="BA000030">
    <property type="protein sequence ID" value="BAC73163.1"/>
    <property type="molecule type" value="Genomic_DNA"/>
</dbReference>
<dbReference type="RefSeq" id="WP_010986853.1">
    <property type="nucleotide sequence ID" value="NZ_JZJK01000066.1"/>
</dbReference>
<dbReference type="SMR" id="Q82CA3"/>
<dbReference type="GeneID" id="41542543"/>
<dbReference type="KEGG" id="sma:SAVERM_5451"/>
<dbReference type="eggNOG" id="COG0525">
    <property type="taxonomic scope" value="Bacteria"/>
</dbReference>
<dbReference type="HOGENOM" id="CLU_001493_0_2_11"/>
<dbReference type="OrthoDB" id="9810365at2"/>
<dbReference type="Proteomes" id="UP000000428">
    <property type="component" value="Chromosome"/>
</dbReference>
<dbReference type="GO" id="GO:0005829">
    <property type="term" value="C:cytosol"/>
    <property type="evidence" value="ECO:0007669"/>
    <property type="project" value="TreeGrafter"/>
</dbReference>
<dbReference type="GO" id="GO:0002161">
    <property type="term" value="F:aminoacyl-tRNA deacylase activity"/>
    <property type="evidence" value="ECO:0007669"/>
    <property type="project" value="InterPro"/>
</dbReference>
<dbReference type="GO" id="GO:0005524">
    <property type="term" value="F:ATP binding"/>
    <property type="evidence" value="ECO:0007669"/>
    <property type="project" value="UniProtKB-UniRule"/>
</dbReference>
<dbReference type="GO" id="GO:0004832">
    <property type="term" value="F:valine-tRNA ligase activity"/>
    <property type="evidence" value="ECO:0007669"/>
    <property type="project" value="UniProtKB-UniRule"/>
</dbReference>
<dbReference type="GO" id="GO:0006438">
    <property type="term" value="P:valyl-tRNA aminoacylation"/>
    <property type="evidence" value="ECO:0007669"/>
    <property type="project" value="UniProtKB-UniRule"/>
</dbReference>
<dbReference type="CDD" id="cd07962">
    <property type="entry name" value="Anticodon_Ia_Val"/>
    <property type="match status" value="1"/>
</dbReference>
<dbReference type="CDD" id="cd00817">
    <property type="entry name" value="ValRS_core"/>
    <property type="match status" value="1"/>
</dbReference>
<dbReference type="FunFam" id="1.10.287.380:FF:000001">
    <property type="entry name" value="Valine--tRNA ligase"/>
    <property type="match status" value="1"/>
</dbReference>
<dbReference type="FunFam" id="1.10.730.10:FF:000027">
    <property type="entry name" value="Valine--tRNA ligase"/>
    <property type="match status" value="1"/>
</dbReference>
<dbReference type="FunFam" id="3.40.50.620:FF:000098">
    <property type="entry name" value="Valine--tRNA ligase"/>
    <property type="match status" value="1"/>
</dbReference>
<dbReference type="FunFam" id="3.40.50.620:FF:000129">
    <property type="entry name" value="Valine--tRNA ligase"/>
    <property type="match status" value="1"/>
</dbReference>
<dbReference type="FunFam" id="3.90.740.10:FF:000005">
    <property type="entry name" value="Valine--tRNA ligase, mitochondrial"/>
    <property type="match status" value="1"/>
</dbReference>
<dbReference type="Gene3D" id="3.40.50.620">
    <property type="entry name" value="HUPs"/>
    <property type="match status" value="3"/>
</dbReference>
<dbReference type="Gene3D" id="1.10.730.10">
    <property type="entry name" value="Isoleucyl-tRNA Synthetase, Domain 1"/>
    <property type="match status" value="1"/>
</dbReference>
<dbReference type="Gene3D" id="1.10.287.380">
    <property type="entry name" value="Valyl-tRNA synthetase, C-terminal domain"/>
    <property type="match status" value="1"/>
</dbReference>
<dbReference type="Gene3D" id="3.90.740.10">
    <property type="entry name" value="Valyl/Leucyl/Isoleucyl-tRNA synthetase, editing domain"/>
    <property type="match status" value="1"/>
</dbReference>
<dbReference type="HAMAP" id="MF_02004">
    <property type="entry name" value="Val_tRNA_synth_type1"/>
    <property type="match status" value="1"/>
</dbReference>
<dbReference type="InterPro" id="IPR001412">
    <property type="entry name" value="aa-tRNA-synth_I_CS"/>
</dbReference>
<dbReference type="InterPro" id="IPR002300">
    <property type="entry name" value="aa-tRNA-synth_Ia"/>
</dbReference>
<dbReference type="InterPro" id="IPR033705">
    <property type="entry name" value="Anticodon_Ia_Val"/>
</dbReference>
<dbReference type="InterPro" id="IPR013155">
    <property type="entry name" value="M/V/L/I-tRNA-synth_anticd-bd"/>
</dbReference>
<dbReference type="InterPro" id="IPR014729">
    <property type="entry name" value="Rossmann-like_a/b/a_fold"/>
</dbReference>
<dbReference type="InterPro" id="IPR010978">
    <property type="entry name" value="tRNA-bd_arm"/>
</dbReference>
<dbReference type="InterPro" id="IPR009080">
    <property type="entry name" value="tRNAsynth_Ia_anticodon-bd"/>
</dbReference>
<dbReference type="InterPro" id="IPR037118">
    <property type="entry name" value="Val-tRNA_synth_C_sf"/>
</dbReference>
<dbReference type="InterPro" id="IPR019499">
    <property type="entry name" value="Val-tRNA_synth_tRNA-bd"/>
</dbReference>
<dbReference type="InterPro" id="IPR009008">
    <property type="entry name" value="Val/Leu/Ile-tRNA-synth_edit"/>
</dbReference>
<dbReference type="InterPro" id="IPR002303">
    <property type="entry name" value="Valyl-tRNA_ligase"/>
</dbReference>
<dbReference type="NCBIfam" id="NF004349">
    <property type="entry name" value="PRK05729.1"/>
    <property type="match status" value="1"/>
</dbReference>
<dbReference type="NCBIfam" id="TIGR00422">
    <property type="entry name" value="valS"/>
    <property type="match status" value="1"/>
</dbReference>
<dbReference type="PANTHER" id="PTHR11946:SF93">
    <property type="entry name" value="VALINE--TRNA LIGASE, CHLOROPLASTIC_MITOCHONDRIAL 2"/>
    <property type="match status" value="1"/>
</dbReference>
<dbReference type="PANTHER" id="PTHR11946">
    <property type="entry name" value="VALYL-TRNA SYNTHETASES"/>
    <property type="match status" value="1"/>
</dbReference>
<dbReference type="Pfam" id="PF08264">
    <property type="entry name" value="Anticodon_1"/>
    <property type="match status" value="1"/>
</dbReference>
<dbReference type="Pfam" id="PF00133">
    <property type="entry name" value="tRNA-synt_1"/>
    <property type="match status" value="2"/>
</dbReference>
<dbReference type="Pfam" id="PF10458">
    <property type="entry name" value="Val_tRNA-synt_C"/>
    <property type="match status" value="1"/>
</dbReference>
<dbReference type="PRINTS" id="PR00986">
    <property type="entry name" value="TRNASYNTHVAL"/>
</dbReference>
<dbReference type="SUPFAM" id="SSF47323">
    <property type="entry name" value="Anticodon-binding domain of a subclass of class I aminoacyl-tRNA synthetases"/>
    <property type="match status" value="1"/>
</dbReference>
<dbReference type="SUPFAM" id="SSF52374">
    <property type="entry name" value="Nucleotidylyl transferase"/>
    <property type="match status" value="1"/>
</dbReference>
<dbReference type="SUPFAM" id="SSF46589">
    <property type="entry name" value="tRNA-binding arm"/>
    <property type="match status" value="1"/>
</dbReference>
<dbReference type="SUPFAM" id="SSF50677">
    <property type="entry name" value="ValRS/IleRS/LeuRS editing domain"/>
    <property type="match status" value="1"/>
</dbReference>
<dbReference type="PROSITE" id="PS00178">
    <property type="entry name" value="AA_TRNA_LIGASE_I"/>
    <property type="match status" value="1"/>
</dbReference>
<keyword id="KW-0030">Aminoacyl-tRNA synthetase</keyword>
<keyword id="KW-0067">ATP-binding</keyword>
<keyword id="KW-0175">Coiled coil</keyword>
<keyword id="KW-0963">Cytoplasm</keyword>
<keyword id="KW-0436">Ligase</keyword>
<keyword id="KW-0547">Nucleotide-binding</keyword>
<keyword id="KW-0648">Protein biosynthesis</keyword>
<keyword id="KW-1185">Reference proteome</keyword>
<sequence length="874" mass="97527">MTENSQQQPPASEPELPTQYAPADVEGTLYERWVERGYFEADAKSDKPPFTVVIPPPNVTGSLHLGHAFEHTLIDALTRRKRMQGYETLWQPGMDHAGIATQNVVERELGKEGKSRHDLGRAAFVERVWQWKAESGGQISGQMRRLGDGVAWSRERFTMDEGLSQAVQTIFKKLYDDELIYRAERIINWCPRCLTAISDIEVEYQDDDGELVSMKYGEGDDTIVVATTRAETMLGDTAVAVHPDDERYKHLVGKTIRLPLTERFIPVVADTHVDPEFGTGAVKVTPAHDPNDFEIGQRHNLPNIAVMDEHAVITVSGPFQGLDRLEARSAIVAALRAEGRIVAEKRPYVHSVGHCSRCKTTIEPRLSMQWWVKVGPLAKAAGDAVREGKVKIHPQEMEKRYFDWVDNLHDWCISRQLWWGHRIPVWYGPNGEVVCVGPDDEVPTGEGWSQDTDVLDTWFSSGLWPFSTLGWPEQTESLAKFYPNSVLVTGYDILFFWVARMMMFGLYAMDGTPPFHTIALHGMVRDQFGKKMSKSFGNAVNPLDWMDKYGSDALRFTLARGANPGVDVPIGEDWVQGSRNFANKIWNATRFALMNGATVEGELPPVEQQSATDRWILSRLNATVAEVDALYDDYQFAKLSDALFHFAWDEVFDWYVELSKTTFMGGGEAAKVSGRVLGEVLDVTLRLLHPIVPFVTETLWTTLTGGESVVIADWPVDSGFRDQAAEKEIETLQSVITEVRRFRADQGLQPGQRVPARLTLDDTALAPHEAAIRQLLRLQPEGEDFAATATLPVAGATVALDLSGTIDIVAERKRLAKDLAAAEKEKAQAGAKLGNEAFLAKAPDHVVDKIRGRLAKADEDIARIQAQLDRMPEA</sequence>
<proteinExistence type="inferred from homology"/>
<organism>
    <name type="scientific">Streptomyces avermitilis (strain ATCC 31267 / DSM 46492 / JCM 5070 / NBRC 14893 / NCIMB 12804 / NRRL 8165 / MA-4680)</name>
    <dbReference type="NCBI Taxonomy" id="227882"/>
    <lineage>
        <taxon>Bacteria</taxon>
        <taxon>Bacillati</taxon>
        <taxon>Actinomycetota</taxon>
        <taxon>Actinomycetes</taxon>
        <taxon>Kitasatosporales</taxon>
        <taxon>Streptomycetaceae</taxon>
        <taxon>Streptomyces</taxon>
    </lineage>
</organism>